<sequence>MPQLELISWFFNFLLAWFFLFIVVTILLKINFPSTNYITVTHPQKLNIFNNWLWT</sequence>
<name>ATP8_PISOC</name>
<organism>
    <name type="scientific">Pisaster ochraceus</name>
    <name type="common">Ochre sea star</name>
    <name type="synonym">Asterias ochracea</name>
    <dbReference type="NCBI Taxonomy" id="7612"/>
    <lineage>
        <taxon>Eukaryota</taxon>
        <taxon>Metazoa</taxon>
        <taxon>Echinodermata</taxon>
        <taxon>Eleutherozoa</taxon>
        <taxon>Asterozoa</taxon>
        <taxon>Asteroidea</taxon>
        <taxon>Forcipulatacea</taxon>
        <taxon>Forcipulatida</taxon>
        <taxon>Asteriidae</taxon>
        <taxon>Pisaster</taxon>
    </lineage>
</organism>
<geneLocation type="mitochondrion"/>
<dbReference type="EMBL" id="X55514">
    <property type="protein sequence ID" value="CAA39127.1"/>
    <property type="molecule type" value="Genomic_DNA"/>
</dbReference>
<dbReference type="PIR" id="S14208">
    <property type="entry name" value="S14208"/>
</dbReference>
<dbReference type="SMR" id="P25004"/>
<dbReference type="GO" id="GO:0031966">
    <property type="term" value="C:mitochondrial membrane"/>
    <property type="evidence" value="ECO:0007669"/>
    <property type="project" value="UniProtKB-SubCell"/>
</dbReference>
<dbReference type="GO" id="GO:0045259">
    <property type="term" value="C:proton-transporting ATP synthase complex"/>
    <property type="evidence" value="ECO:0007669"/>
    <property type="project" value="UniProtKB-KW"/>
</dbReference>
<dbReference type="GO" id="GO:0006754">
    <property type="term" value="P:ATP biosynthetic process"/>
    <property type="evidence" value="ECO:0007669"/>
    <property type="project" value="UniProtKB-KW"/>
</dbReference>
<dbReference type="GO" id="GO:1902600">
    <property type="term" value="P:proton transmembrane transport"/>
    <property type="evidence" value="ECO:0007669"/>
    <property type="project" value="UniProtKB-KW"/>
</dbReference>
<feature type="chain" id="PRO_0000195571" description="ATP synthase protein 8">
    <location>
        <begin position="1"/>
        <end position="55"/>
    </location>
</feature>
<feature type="transmembrane region" description="Helical" evidence="2">
    <location>
        <begin position="7"/>
        <end position="28"/>
    </location>
</feature>
<reference key="1">
    <citation type="journal article" date="1990" name="J. Mol. Evol.">
        <title>Nucleotide sequence of nine protein-coding genes and 22 tRNAs in the mitochondrial DNA of the sea star Pisaster ochraceus.</title>
        <authorList>
            <person name="Smith M.J."/>
            <person name="Banfield D.K."/>
            <person name="Doteval K."/>
            <person name="Gorski S."/>
            <person name="Kowbel D.J."/>
        </authorList>
    </citation>
    <scope>NUCLEOTIDE SEQUENCE [GENOMIC DNA]</scope>
</reference>
<comment type="function">
    <text evidence="1">Mitochondrial membrane ATP synthase (F(1)F(0) ATP synthase or Complex V) produces ATP from ADP in the presence of a proton gradient across the membrane which is generated by electron transport complexes of the respiratory chain. F-type ATPases consist of two structural domains, F(1) - containing the extramembraneous catalytic core and F(0) - containing the membrane proton channel, linked together by a central stalk and a peripheral stalk. During catalysis, ATP synthesis in the catalytic domain of F(1) is coupled via a rotary mechanism of the central stalk subunits to proton translocation. Part of the complex F(0) domain. Minor subunit located with subunit a in the membrane (By similarity).</text>
</comment>
<comment type="subunit">
    <text evidence="1">F-type ATPases have 2 components, CF(1) - the catalytic core - and CF(0) - the membrane proton channel.</text>
</comment>
<comment type="subcellular location">
    <subcellularLocation>
        <location>Mitochondrion membrane</location>
        <topology>Single-pass membrane protein</topology>
    </subcellularLocation>
</comment>
<comment type="similarity">
    <text evidence="3">Belongs to the ATPase protein 8 family.</text>
</comment>
<keyword id="KW-0066">ATP synthesis</keyword>
<keyword id="KW-0138">CF(0)</keyword>
<keyword id="KW-0375">Hydrogen ion transport</keyword>
<keyword id="KW-0406">Ion transport</keyword>
<keyword id="KW-0472">Membrane</keyword>
<keyword id="KW-0496">Mitochondrion</keyword>
<keyword id="KW-0812">Transmembrane</keyword>
<keyword id="KW-1133">Transmembrane helix</keyword>
<keyword id="KW-0813">Transport</keyword>
<evidence type="ECO:0000250" key="1"/>
<evidence type="ECO:0000255" key="2"/>
<evidence type="ECO:0000305" key="3"/>
<protein>
    <recommendedName>
        <fullName>ATP synthase protein 8</fullName>
    </recommendedName>
    <alternativeName>
        <fullName>A6L</fullName>
    </alternativeName>
    <alternativeName>
        <fullName>F-ATPase subunit 8</fullName>
    </alternativeName>
</protein>
<accession>P25004</accession>
<gene>
    <name type="primary">MT-ATP8</name>
    <name type="synonym">ATP8</name>
    <name type="synonym">ATPASE8</name>
    <name type="synonym">MTATP8</name>
</gene>
<proteinExistence type="inferred from homology"/>